<dbReference type="EMBL" id="AP006861">
    <property type="protein sequence ID" value="BAE81588.1"/>
    <property type="molecule type" value="Genomic_DNA"/>
</dbReference>
<dbReference type="RefSeq" id="WP_011458364.1">
    <property type="nucleotide sequence ID" value="NC_007899.1"/>
</dbReference>
<dbReference type="SMR" id="Q253F0"/>
<dbReference type="STRING" id="264202.CF0816"/>
<dbReference type="KEGG" id="cfe:CF0816"/>
<dbReference type="eggNOG" id="COG0049">
    <property type="taxonomic scope" value="Bacteria"/>
</dbReference>
<dbReference type="HOGENOM" id="CLU_072226_1_1_0"/>
<dbReference type="OrthoDB" id="9807653at2"/>
<dbReference type="Proteomes" id="UP000001260">
    <property type="component" value="Chromosome"/>
</dbReference>
<dbReference type="GO" id="GO:0015935">
    <property type="term" value="C:small ribosomal subunit"/>
    <property type="evidence" value="ECO:0007669"/>
    <property type="project" value="InterPro"/>
</dbReference>
<dbReference type="GO" id="GO:0019843">
    <property type="term" value="F:rRNA binding"/>
    <property type="evidence" value="ECO:0007669"/>
    <property type="project" value="UniProtKB-UniRule"/>
</dbReference>
<dbReference type="GO" id="GO:0003735">
    <property type="term" value="F:structural constituent of ribosome"/>
    <property type="evidence" value="ECO:0007669"/>
    <property type="project" value="InterPro"/>
</dbReference>
<dbReference type="GO" id="GO:0000049">
    <property type="term" value="F:tRNA binding"/>
    <property type="evidence" value="ECO:0007669"/>
    <property type="project" value="UniProtKB-UniRule"/>
</dbReference>
<dbReference type="GO" id="GO:0006412">
    <property type="term" value="P:translation"/>
    <property type="evidence" value="ECO:0007669"/>
    <property type="project" value="UniProtKB-UniRule"/>
</dbReference>
<dbReference type="CDD" id="cd14869">
    <property type="entry name" value="uS7_Bacteria"/>
    <property type="match status" value="1"/>
</dbReference>
<dbReference type="FunFam" id="1.10.455.10:FF:000001">
    <property type="entry name" value="30S ribosomal protein S7"/>
    <property type="match status" value="1"/>
</dbReference>
<dbReference type="Gene3D" id="1.10.455.10">
    <property type="entry name" value="Ribosomal protein S7 domain"/>
    <property type="match status" value="1"/>
</dbReference>
<dbReference type="HAMAP" id="MF_00480_B">
    <property type="entry name" value="Ribosomal_uS7_B"/>
    <property type="match status" value="1"/>
</dbReference>
<dbReference type="InterPro" id="IPR000235">
    <property type="entry name" value="Ribosomal_uS7"/>
</dbReference>
<dbReference type="InterPro" id="IPR005717">
    <property type="entry name" value="Ribosomal_uS7_bac/org-type"/>
</dbReference>
<dbReference type="InterPro" id="IPR020606">
    <property type="entry name" value="Ribosomal_uS7_CS"/>
</dbReference>
<dbReference type="InterPro" id="IPR023798">
    <property type="entry name" value="Ribosomal_uS7_dom"/>
</dbReference>
<dbReference type="InterPro" id="IPR036823">
    <property type="entry name" value="Ribosomal_uS7_dom_sf"/>
</dbReference>
<dbReference type="NCBIfam" id="TIGR01029">
    <property type="entry name" value="rpsG_bact"/>
    <property type="match status" value="1"/>
</dbReference>
<dbReference type="PANTHER" id="PTHR11205">
    <property type="entry name" value="RIBOSOMAL PROTEIN S7"/>
    <property type="match status" value="1"/>
</dbReference>
<dbReference type="Pfam" id="PF00177">
    <property type="entry name" value="Ribosomal_S7"/>
    <property type="match status" value="1"/>
</dbReference>
<dbReference type="PIRSF" id="PIRSF002122">
    <property type="entry name" value="RPS7p_RPS7a_RPS5e_RPS7o"/>
    <property type="match status" value="1"/>
</dbReference>
<dbReference type="SUPFAM" id="SSF47973">
    <property type="entry name" value="Ribosomal protein S7"/>
    <property type="match status" value="1"/>
</dbReference>
<dbReference type="PROSITE" id="PS00052">
    <property type="entry name" value="RIBOSOMAL_S7"/>
    <property type="match status" value="1"/>
</dbReference>
<accession>Q253F0</accession>
<sequence length="157" mass="17662">MSRRHAAEKKVVPADPIYGSVTLERFINKVMMHGKKSIARKIVYSALERFAKKVGAENALEAFEEALENAKPLLEVRSRRVGGATYQVPVEVAAGRRDCLAMQWIIKFARAKPGKSMEVGLATELVDCFNKQGATIKKREDTHRMAEANKAFAHYKW</sequence>
<evidence type="ECO:0000255" key="1">
    <source>
        <dbReference type="HAMAP-Rule" id="MF_00480"/>
    </source>
</evidence>
<evidence type="ECO:0000305" key="2"/>
<protein>
    <recommendedName>
        <fullName evidence="1">Small ribosomal subunit protein uS7</fullName>
    </recommendedName>
    <alternativeName>
        <fullName evidence="2">30S ribosomal protein S7</fullName>
    </alternativeName>
</protein>
<feature type="chain" id="PRO_0000241754" description="Small ribosomal subunit protein uS7">
    <location>
        <begin position="1"/>
        <end position="157"/>
    </location>
</feature>
<keyword id="KW-0687">Ribonucleoprotein</keyword>
<keyword id="KW-0689">Ribosomal protein</keyword>
<keyword id="KW-0694">RNA-binding</keyword>
<keyword id="KW-0699">rRNA-binding</keyword>
<keyword id="KW-0820">tRNA-binding</keyword>
<comment type="function">
    <text evidence="1">One of the primary rRNA binding proteins, it binds directly to 16S rRNA where it nucleates assembly of the head domain of the 30S subunit. Is located at the subunit interface close to the decoding center, probably blocks exit of the E-site tRNA.</text>
</comment>
<comment type="subunit">
    <text evidence="1">Part of the 30S ribosomal subunit. Contacts proteins S9 and S11.</text>
</comment>
<comment type="similarity">
    <text evidence="1">Belongs to the universal ribosomal protein uS7 family.</text>
</comment>
<proteinExistence type="inferred from homology"/>
<reference key="1">
    <citation type="journal article" date="2006" name="DNA Res.">
        <title>Genome sequence of the cat pathogen, Chlamydophila felis.</title>
        <authorList>
            <person name="Azuma Y."/>
            <person name="Hirakawa H."/>
            <person name="Yamashita A."/>
            <person name="Cai Y."/>
            <person name="Rahman M.A."/>
            <person name="Suzuki H."/>
            <person name="Mitaku S."/>
            <person name="Toh H."/>
            <person name="Goto S."/>
            <person name="Murakami T."/>
            <person name="Sugi K."/>
            <person name="Hayashi H."/>
            <person name="Fukushi H."/>
            <person name="Hattori M."/>
            <person name="Kuhara S."/>
            <person name="Shirai M."/>
        </authorList>
    </citation>
    <scope>NUCLEOTIDE SEQUENCE [LARGE SCALE GENOMIC DNA]</scope>
    <source>
        <strain>Fe/C-56</strain>
    </source>
</reference>
<gene>
    <name evidence="1" type="primary">rpsG</name>
    <name type="ordered locus">CF0816</name>
</gene>
<name>RS7_CHLFF</name>
<organism>
    <name type="scientific">Chlamydia felis (strain Fe/C-56)</name>
    <name type="common">Chlamydophila felis</name>
    <dbReference type="NCBI Taxonomy" id="264202"/>
    <lineage>
        <taxon>Bacteria</taxon>
        <taxon>Pseudomonadati</taxon>
        <taxon>Chlamydiota</taxon>
        <taxon>Chlamydiia</taxon>
        <taxon>Chlamydiales</taxon>
        <taxon>Chlamydiaceae</taxon>
        <taxon>Chlamydia/Chlamydophila group</taxon>
        <taxon>Chlamydia</taxon>
    </lineage>
</organism>